<organism>
    <name type="scientific">Nicotiana tabacum</name>
    <name type="common">Common tobacco</name>
    <dbReference type="NCBI Taxonomy" id="4097"/>
    <lineage>
        <taxon>Eukaryota</taxon>
        <taxon>Viridiplantae</taxon>
        <taxon>Streptophyta</taxon>
        <taxon>Embryophyta</taxon>
        <taxon>Tracheophyta</taxon>
        <taxon>Spermatophyta</taxon>
        <taxon>Magnoliopsida</taxon>
        <taxon>eudicotyledons</taxon>
        <taxon>Gunneridae</taxon>
        <taxon>Pentapetalae</taxon>
        <taxon>asterids</taxon>
        <taxon>lamiids</taxon>
        <taxon>Solanales</taxon>
        <taxon>Solanaceae</taxon>
        <taxon>Nicotianoideae</taxon>
        <taxon>Nicotianeae</taxon>
        <taxon>Nicotiana</taxon>
    </lineage>
</organism>
<accession>P06411</accession>
<proteinExistence type="inferred from homology"/>
<reference key="1">
    <citation type="journal article" date="1986" name="EMBO J.">
        <title>The complete nucleotide sequence of the tobacco chloroplast genome: its gene organization and expression.</title>
        <authorList>
            <person name="Shinozaki K."/>
            <person name="Ohme M."/>
            <person name="Tanaka M."/>
            <person name="Wakasugi T."/>
            <person name="Hayashida N."/>
            <person name="Matsubayashi T."/>
            <person name="Zaita N."/>
            <person name="Chunwongse J."/>
            <person name="Obokata J."/>
            <person name="Yamaguchi-Shinozaki K."/>
            <person name="Ohto C."/>
            <person name="Torazawa K."/>
            <person name="Meng B.-Y."/>
            <person name="Sugita M."/>
            <person name="Deno H."/>
            <person name="Kamogashira T."/>
            <person name="Yamada K."/>
            <person name="Kusuda J."/>
            <person name="Takaiwa F."/>
            <person name="Kato A."/>
            <person name="Tohdoh N."/>
            <person name="Shimada H."/>
            <person name="Sugiura M."/>
        </authorList>
    </citation>
    <scope>NUCLEOTIDE SEQUENCE [LARGE SCALE GENOMIC DNA]</scope>
    <source>
        <strain>cv. Bright Yellow 4</strain>
    </source>
</reference>
<keyword id="KW-0148">Chlorophyll</keyword>
<keyword id="KW-0150">Chloroplast</keyword>
<keyword id="KW-0157">Chromophore</keyword>
<keyword id="KW-0472">Membrane</keyword>
<keyword id="KW-0602">Photosynthesis</keyword>
<keyword id="KW-0604">Photosystem II</keyword>
<keyword id="KW-0934">Plastid</keyword>
<keyword id="KW-1185">Reference proteome</keyword>
<keyword id="KW-0793">Thylakoid</keyword>
<keyword id="KW-0812">Transmembrane</keyword>
<keyword id="KW-1133">Transmembrane helix</keyword>
<protein>
    <recommendedName>
        <fullName evidence="1">Photosystem II CP47 reaction center protein</fullName>
    </recommendedName>
    <alternativeName>
        <fullName evidence="1">PSII 47 kDa protein</fullName>
    </alternativeName>
    <alternativeName>
        <fullName evidence="1">Protein CP-47</fullName>
    </alternativeName>
</protein>
<comment type="function">
    <text evidence="1">One of the components of the core complex of photosystem II (PSII). It binds chlorophyll and helps catalyze the primary light-induced photochemical processes of PSII. PSII is a light-driven water:plastoquinone oxidoreductase, using light energy to abstract electrons from H(2)O, generating O(2) and a proton gradient subsequently used for ATP formation.</text>
</comment>
<comment type="cofactor">
    <text evidence="1">Binds multiple chlorophylls. PSII binds additional chlorophylls, carotenoids and specific lipids.</text>
</comment>
<comment type="subunit">
    <text evidence="1">PSII is composed of 1 copy each of membrane proteins PsbA, PsbB, PsbC, PsbD, PsbE, PsbF, PsbH, PsbI, PsbJ, PsbK, PsbL, PsbM, PsbT, PsbX, PsbY, PsbZ, Psb30/Ycf12, at least 3 peripheral proteins of the oxygen-evolving complex and a large number of cofactors. It forms dimeric complexes.</text>
</comment>
<comment type="subcellular location">
    <subcellularLocation>
        <location evidence="1">Plastid</location>
        <location evidence="1">Chloroplast thylakoid membrane</location>
        <topology evidence="1">Multi-pass membrane protein</topology>
    </subcellularLocation>
</comment>
<comment type="similarity">
    <text evidence="1">Belongs to the PsbB/PsbC family. PsbB subfamily.</text>
</comment>
<sequence>MGLPWYRVHTVVLNDPGRLLSVHIMHTALVAGWAGSMALYELAVFDPSDPVLDPMWRQGMFVIPFMTRLGITNSWGGWSITGGTVTNPGIWSYEGVAGAHIVFSGLCFLAAIWHWVYWDLEIFCDERTGKPSLDLPKIFGIHLFLSGVACFGFGAFHVTGLYGPGIWVSDPYGLTGKVQPVNPAWGVEGFDPFVPGGIASHHIAAGTLGILAGLFHLSVRPPQRLYKGLRMGNIETVLSSSIAAVFFAAFVVAGTMWYGSATTPIELFGPTRYQWDQGYFQQEIYRRVSAGLAENQSLSEAWSKIPEKLAFYDYIGNNPAKGGLFRAGSMDNGDGIAVGWLGHPIFRDKEGRELFVRRMPTFFETFPVVLVDGDGIVRADVPFRRAESKYSVEQVGVTVEFYGGELNGVSYSDPATVKKYARRAQLGEIFELDRATLKSDGVFRSSPRGWFTFGHASFALLFFFGHIWHGARTLFRDVFAGIDPDLDAQVEFGAFQKLGDPTTKRQAA</sequence>
<feature type="chain" id="PRO_0000077499" description="Photosystem II CP47 reaction center protein">
    <location>
        <begin position="1"/>
        <end position="508"/>
    </location>
</feature>
<feature type="transmembrane region" description="Helical" evidence="1">
    <location>
        <begin position="21"/>
        <end position="36"/>
    </location>
</feature>
<feature type="transmembrane region" description="Helical" evidence="1">
    <location>
        <begin position="101"/>
        <end position="115"/>
    </location>
</feature>
<feature type="transmembrane region" description="Helical" evidence="1">
    <location>
        <begin position="140"/>
        <end position="156"/>
    </location>
</feature>
<feature type="transmembrane region" description="Helical" evidence="1">
    <location>
        <begin position="203"/>
        <end position="218"/>
    </location>
</feature>
<feature type="transmembrane region" description="Helical" evidence="1">
    <location>
        <begin position="237"/>
        <end position="252"/>
    </location>
</feature>
<feature type="transmembrane region" description="Helical" evidence="1">
    <location>
        <begin position="457"/>
        <end position="472"/>
    </location>
</feature>
<evidence type="ECO:0000255" key="1">
    <source>
        <dbReference type="HAMAP-Rule" id="MF_01495"/>
    </source>
</evidence>
<geneLocation type="chloroplast"/>
<name>PSBB_TOBAC</name>
<gene>
    <name evidence="1" type="primary">psbB</name>
</gene>
<dbReference type="EMBL" id="Z00044">
    <property type="protein sequence ID" value="CAA77373.1"/>
    <property type="molecule type" value="Genomic_DNA"/>
</dbReference>
<dbReference type="PIR" id="A03471">
    <property type="entry name" value="QJNT6A"/>
</dbReference>
<dbReference type="RefSeq" id="NP_054526.1">
    <property type="nucleotide sequence ID" value="NC_001879.2"/>
</dbReference>
<dbReference type="SMR" id="P06411"/>
<dbReference type="GeneID" id="800527"/>
<dbReference type="KEGG" id="nta:800527"/>
<dbReference type="OMA" id="MLAAIWH"/>
<dbReference type="OrthoDB" id="375at2759"/>
<dbReference type="Proteomes" id="UP000084051">
    <property type="component" value="Unplaced"/>
</dbReference>
<dbReference type="GO" id="GO:0009535">
    <property type="term" value="C:chloroplast thylakoid membrane"/>
    <property type="evidence" value="ECO:0007669"/>
    <property type="project" value="UniProtKB-SubCell"/>
</dbReference>
<dbReference type="GO" id="GO:0009523">
    <property type="term" value="C:photosystem II"/>
    <property type="evidence" value="ECO:0007669"/>
    <property type="project" value="UniProtKB-KW"/>
</dbReference>
<dbReference type="GO" id="GO:0016168">
    <property type="term" value="F:chlorophyll binding"/>
    <property type="evidence" value="ECO:0007669"/>
    <property type="project" value="UniProtKB-UniRule"/>
</dbReference>
<dbReference type="GO" id="GO:0045156">
    <property type="term" value="F:electron transporter, transferring electrons within the cyclic electron transport pathway of photosynthesis activity"/>
    <property type="evidence" value="ECO:0007669"/>
    <property type="project" value="InterPro"/>
</dbReference>
<dbReference type="GO" id="GO:0009772">
    <property type="term" value="P:photosynthetic electron transport in photosystem II"/>
    <property type="evidence" value="ECO:0007669"/>
    <property type="project" value="InterPro"/>
</dbReference>
<dbReference type="FunFam" id="3.10.680.10:FF:000001">
    <property type="entry name" value="Photosystem II CP47 reaction center protein"/>
    <property type="match status" value="1"/>
</dbReference>
<dbReference type="Gene3D" id="3.10.680.10">
    <property type="entry name" value="Photosystem II CP47 reaction center protein"/>
    <property type="match status" value="1"/>
</dbReference>
<dbReference type="HAMAP" id="MF_01495">
    <property type="entry name" value="PSII_PsbB_CP47"/>
    <property type="match status" value="1"/>
</dbReference>
<dbReference type="InterPro" id="IPR000932">
    <property type="entry name" value="PS_antenna-like"/>
</dbReference>
<dbReference type="InterPro" id="IPR036001">
    <property type="entry name" value="PS_II_antenna-like_sf"/>
</dbReference>
<dbReference type="InterPro" id="IPR017486">
    <property type="entry name" value="PSII_PsbB"/>
</dbReference>
<dbReference type="NCBIfam" id="TIGR03039">
    <property type="entry name" value="PS_II_CP47"/>
    <property type="match status" value="1"/>
</dbReference>
<dbReference type="PANTHER" id="PTHR33180">
    <property type="entry name" value="PHOTOSYSTEM II CP43 REACTION CENTER PROTEIN"/>
    <property type="match status" value="1"/>
</dbReference>
<dbReference type="PANTHER" id="PTHR33180:SF35">
    <property type="entry name" value="PHOTOSYSTEM II CP47 REACTION CENTER PROTEIN"/>
    <property type="match status" value="1"/>
</dbReference>
<dbReference type="Pfam" id="PF00421">
    <property type="entry name" value="PSII"/>
    <property type="match status" value="1"/>
</dbReference>
<dbReference type="SUPFAM" id="SSF161077">
    <property type="entry name" value="Photosystem II antenna protein-like"/>
    <property type="match status" value="1"/>
</dbReference>